<protein>
    <recommendedName>
        <fullName>CDT1-like protein a, chloroplastic</fullName>
        <shortName>AtCDT1a</shortName>
    </recommendedName>
</protein>
<feature type="transit peptide" description="Chloroplast" evidence="1">
    <location>
        <begin position="1"/>
        <end position="79"/>
    </location>
</feature>
<feature type="chain" id="PRO_0000406938" description="CDT1-like protein a, chloroplastic">
    <location>
        <begin position="80"/>
        <end position="571"/>
    </location>
</feature>
<feature type="region of interest" description="Disordered" evidence="2">
    <location>
        <begin position="1"/>
        <end position="110"/>
    </location>
</feature>
<feature type="region of interest" description="Disordered" evidence="2">
    <location>
        <begin position="288"/>
        <end position="315"/>
    </location>
</feature>
<feature type="compositionally biased region" description="Polar residues" evidence="2">
    <location>
        <begin position="22"/>
        <end position="38"/>
    </location>
</feature>
<feature type="compositionally biased region" description="Low complexity" evidence="2">
    <location>
        <begin position="81"/>
        <end position="96"/>
    </location>
</feature>
<feature type="compositionally biased region" description="Polar residues" evidence="2">
    <location>
        <begin position="288"/>
        <end position="302"/>
    </location>
</feature>
<feature type="compositionally biased region" description="Low complexity" evidence="2">
    <location>
        <begin position="303"/>
        <end position="315"/>
    </location>
</feature>
<feature type="sequence conflict" description="In Ref. 1; CAD13172." evidence="6" ref="1">
    <original>K</original>
    <variation>R</variation>
    <location>
        <position position="114"/>
    </location>
</feature>
<organism>
    <name type="scientific">Arabidopsis thaliana</name>
    <name type="common">Mouse-ear cress</name>
    <dbReference type="NCBI Taxonomy" id="3702"/>
    <lineage>
        <taxon>Eukaryota</taxon>
        <taxon>Viridiplantae</taxon>
        <taxon>Streptophyta</taxon>
        <taxon>Embryophyta</taxon>
        <taxon>Tracheophyta</taxon>
        <taxon>Spermatophyta</taxon>
        <taxon>Magnoliopsida</taxon>
        <taxon>eudicotyledons</taxon>
        <taxon>Gunneridae</taxon>
        <taxon>Pentapetalae</taxon>
        <taxon>rosids</taxon>
        <taxon>malvids</taxon>
        <taxon>Brassicales</taxon>
        <taxon>Brassicaceae</taxon>
        <taxon>Camelineae</taxon>
        <taxon>Arabidopsis</taxon>
    </lineage>
</organism>
<comment type="function">
    <text evidence="3 4">Member of the pre-replication complex. Component of the plastid division machinery. Promotes polyloidization and regulates endoreduplication. Involved in the coordination of cell and plastid division.</text>
</comment>
<comment type="subunit">
    <text>Binds to ARC6.</text>
</comment>
<comment type="interaction">
    <interactant intactId="EBI-8079732">
        <id>Q9SJW9</id>
    </interactant>
    <interactant intactId="EBI-541722">
        <id>B7U179</id>
        <label>ABAP1</label>
    </interactant>
    <organismsDiffer>false</organismsDiffer>
    <experiments>3</experiments>
</comment>
<comment type="subcellular location">
    <subcellularLocation>
        <location evidence="4">Plastid</location>
        <location evidence="4">Chloroplast</location>
    </subcellularLocation>
</comment>
<comment type="tissue specificity">
    <text evidence="3">Expressed in proliferating (e.g. shoot and root apical meristems, organ primordia) and endoreplicating cells (e.g. guard cells and stomatal lineage, developing trichomes).</text>
</comment>
<comment type="induction">
    <text evidence="3 5">Repressed by abscisic acid (ABA) and ABAP1. Degraded by the proteasome.</text>
</comment>
<comment type="PTM">
    <text evidence="3">Phosphorylated by cyclin D- and cyclin A-containing CDKA-1, and thus targeted to proteasome-mediated proteolysis.</text>
</comment>
<comment type="similarity">
    <text evidence="6">Belongs to the Cdt1 family.</text>
</comment>
<gene>
    <name type="primary">CDT1A</name>
    <name type="ordered locus">At2g31270</name>
    <name type="ORF">F16D14.11</name>
</gene>
<name>CDT1A_ARATH</name>
<dbReference type="EMBL" id="AJ421408">
    <property type="protein sequence ID" value="CAD13172.2"/>
    <property type="molecule type" value="mRNA"/>
</dbReference>
<dbReference type="EMBL" id="AC006593">
    <property type="protein sequence ID" value="AAD20672.1"/>
    <property type="molecule type" value="Genomic_DNA"/>
</dbReference>
<dbReference type="EMBL" id="CP002685">
    <property type="protein sequence ID" value="AEC08516.1"/>
    <property type="molecule type" value="Genomic_DNA"/>
</dbReference>
<dbReference type="EMBL" id="AY131998">
    <property type="protein sequence ID" value="AAM96888.1"/>
    <property type="molecule type" value="mRNA"/>
</dbReference>
<dbReference type="PIR" id="F84718">
    <property type="entry name" value="F84718"/>
</dbReference>
<dbReference type="RefSeq" id="NP_180685.1">
    <property type="nucleotide sequence ID" value="NM_128683.4"/>
</dbReference>
<dbReference type="SMR" id="Q9SJW9"/>
<dbReference type="BioGRID" id="3032">
    <property type="interactions" value="3"/>
</dbReference>
<dbReference type="FunCoup" id="Q9SJW9">
    <property type="interactions" value="391"/>
</dbReference>
<dbReference type="IntAct" id="Q9SJW9">
    <property type="interactions" value="1"/>
</dbReference>
<dbReference type="MINT" id="Q9SJW9"/>
<dbReference type="STRING" id="3702.Q9SJW9"/>
<dbReference type="GlyGen" id="Q9SJW9">
    <property type="glycosylation" value="2 sites"/>
</dbReference>
<dbReference type="iPTMnet" id="Q9SJW9"/>
<dbReference type="MetOSite" id="Q9SJW9"/>
<dbReference type="PaxDb" id="3702-AT2G31270.1"/>
<dbReference type="ProteomicsDB" id="224470"/>
<dbReference type="EnsemblPlants" id="AT2G31270.1">
    <property type="protein sequence ID" value="AT2G31270.1"/>
    <property type="gene ID" value="AT2G31270"/>
</dbReference>
<dbReference type="GeneID" id="817684"/>
<dbReference type="Gramene" id="AT2G31270.1">
    <property type="protein sequence ID" value="AT2G31270.1"/>
    <property type="gene ID" value="AT2G31270"/>
</dbReference>
<dbReference type="KEGG" id="ath:AT2G31270"/>
<dbReference type="Araport" id="AT2G31270"/>
<dbReference type="TAIR" id="AT2G31270">
    <property type="gene designation" value="CDT1A"/>
</dbReference>
<dbReference type="eggNOG" id="KOG4762">
    <property type="taxonomic scope" value="Eukaryota"/>
</dbReference>
<dbReference type="HOGENOM" id="CLU_019037_1_0_1"/>
<dbReference type="InParanoid" id="Q9SJW9"/>
<dbReference type="OMA" id="QVRENEM"/>
<dbReference type="PhylomeDB" id="Q9SJW9"/>
<dbReference type="PRO" id="PR:Q9SJW9"/>
<dbReference type="Proteomes" id="UP000006548">
    <property type="component" value="Chromosome 2"/>
</dbReference>
<dbReference type="ExpressionAtlas" id="Q9SJW9">
    <property type="expression patterns" value="baseline and differential"/>
</dbReference>
<dbReference type="GO" id="GO:0009507">
    <property type="term" value="C:chloroplast"/>
    <property type="evidence" value="ECO:0000314"/>
    <property type="project" value="UniProtKB"/>
</dbReference>
<dbReference type="GO" id="GO:0005634">
    <property type="term" value="C:nucleus"/>
    <property type="evidence" value="ECO:0000314"/>
    <property type="project" value="TAIR"/>
</dbReference>
<dbReference type="GO" id="GO:0004693">
    <property type="term" value="F:cyclin-dependent protein serine/threonine kinase activity"/>
    <property type="evidence" value="ECO:0000250"/>
    <property type="project" value="TAIR"/>
</dbReference>
<dbReference type="GO" id="GO:0003677">
    <property type="term" value="F:DNA binding"/>
    <property type="evidence" value="ECO:0007669"/>
    <property type="project" value="InterPro"/>
</dbReference>
<dbReference type="GO" id="GO:0070182">
    <property type="term" value="F:DNA polymerase binding"/>
    <property type="evidence" value="ECO:0000353"/>
    <property type="project" value="TAIR"/>
</dbReference>
<dbReference type="GO" id="GO:0019901">
    <property type="term" value="F:protein kinase binding"/>
    <property type="evidence" value="ECO:0000353"/>
    <property type="project" value="UniProtKB"/>
</dbReference>
<dbReference type="GO" id="GO:0009658">
    <property type="term" value="P:chloroplast organization"/>
    <property type="evidence" value="ECO:0000315"/>
    <property type="project" value="TAIR"/>
</dbReference>
<dbReference type="GO" id="GO:0051276">
    <property type="term" value="P:chromosome organization"/>
    <property type="evidence" value="ECO:0000315"/>
    <property type="project" value="TAIR"/>
</dbReference>
<dbReference type="GO" id="GO:0006260">
    <property type="term" value="P:DNA replication"/>
    <property type="evidence" value="ECO:0000315"/>
    <property type="project" value="TAIR"/>
</dbReference>
<dbReference type="GO" id="GO:0071163">
    <property type="term" value="P:DNA replication preinitiation complex assembly"/>
    <property type="evidence" value="ECO:0007669"/>
    <property type="project" value="InterPro"/>
</dbReference>
<dbReference type="GO" id="GO:0048229">
    <property type="term" value="P:gametophyte development"/>
    <property type="evidence" value="ECO:0000315"/>
    <property type="project" value="TAIR"/>
</dbReference>
<dbReference type="GO" id="GO:0030174">
    <property type="term" value="P:regulation of DNA-templated DNA replication initiation"/>
    <property type="evidence" value="ECO:0007669"/>
    <property type="project" value="InterPro"/>
</dbReference>
<dbReference type="CDD" id="cd08767">
    <property type="entry name" value="Cdt1_c"/>
    <property type="match status" value="1"/>
</dbReference>
<dbReference type="CDD" id="cd08674">
    <property type="entry name" value="Cdt1_m"/>
    <property type="match status" value="1"/>
</dbReference>
<dbReference type="FunFam" id="1.10.10.1420:FF:000003">
    <property type="entry name" value="CDT1-like protein a chloroplastic"/>
    <property type="match status" value="1"/>
</dbReference>
<dbReference type="Gene3D" id="1.10.10.1420">
    <property type="entry name" value="DNA replication factor Cdt1, C-terminal WH domain"/>
    <property type="match status" value="1"/>
</dbReference>
<dbReference type="InterPro" id="IPR045173">
    <property type="entry name" value="Cdt1"/>
</dbReference>
<dbReference type="InterPro" id="IPR032054">
    <property type="entry name" value="Cdt1_C"/>
</dbReference>
<dbReference type="InterPro" id="IPR038090">
    <property type="entry name" value="Cdt1_C_WH_dom_sf"/>
</dbReference>
<dbReference type="InterPro" id="IPR014939">
    <property type="entry name" value="CDT1_Gemini-bd-like"/>
</dbReference>
<dbReference type="InterPro" id="IPR036390">
    <property type="entry name" value="WH_DNA-bd_sf"/>
</dbReference>
<dbReference type="PANTHER" id="PTHR28637">
    <property type="entry name" value="DNA REPLICATION FACTOR CDT1"/>
    <property type="match status" value="1"/>
</dbReference>
<dbReference type="PANTHER" id="PTHR28637:SF1">
    <property type="entry name" value="DNA REPLICATION FACTOR CDT1"/>
    <property type="match status" value="1"/>
</dbReference>
<dbReference type="Pfam" id="PF08839">
    <property type="entry name" value="CDT1"/>
    <property type="match status" value="1"/>
</dbReference>
<dbReference type="Pfam" id="PF16679">
    <property type="entry name" value="CDT1_C"/>
    <property type="match status" value="1"/>
</dbReference>
<dbReference type="SMART" id="SM01075">
    <property type="entry name" value="CDT1"/>
    <property type="match status" value="1"/>
</dbReference>
<dbReference type="SUPFAM" id="SSF46785">
    <property type="entry name" value="Winged helix' DNA-binding domain"/>
    <property type="match status" value="1"/>
</dbReference>
<keyword id="KW-0131">Cell cycle</keyword>
<keyword id="KW-0150">Chloroplast</keyword>
<keyword id="KW-0235">DNA replication</keyword>
<keyword id="KW-0597">Phosphoprotein</keyword>
<keyword id="KW-0934">Plastid</keyword>
<keyword id="KW-1185">Reference proteome</keyword>
<keyword id="KW-0809">Transit peptide</keyword>
<accession>Q9SJW9</accession>
<accession>Q710F0</accession>
<accession>Q8L7I6</accession>
<sequence length="571" mass="63740">MSTPGSSRSIPFKSKKRLVMDSPSSKSQTGNPNPSSVALPTPEKPLENMLSRSRNRSVALSVKEIRQAAGSRRRSEDPVASSAKSRLFFDSSSSSPSKRKSSNKNAEKEKLPEKYENLGKFFEALDNSMLLSKLRGSKPTFSNISKQIEHLTERRFCYSHLAQIKHILPEAIEIKRVLIHDETTCCMKPDLHVTLNADAVEYNDKSKSESKKIALRKVFRARLADFVKAHPQGDEVPEEPLPEPFNRRKPVENSNVEVKRVSSLMEEMASIPASKLFSSPITSTPVKTTSSLAKPTSSQINIAPTPTKPTSTPAKQTLSEINILPTPVKPVSTLAKFPSTPAIIDSTPVITATPPEFASTPARLMSTSLAARPLKRSNGHTNPDDISADPPTKLVRRSLSLNFDSYPEDERTMDFTDDIPIDQVPEEDVSSDDEILSILPDKLRHAIKEQERKAIEDQNPAISLAKRRRKMIACLPKLFNVIHYLIQSIRRWVITKEELVHKIIAGHSDITDRKEVEEQLILLQEIVPEWMSEKKSSSGDVLVCINKLASPLTIRSRLEEENKQEMAPLLS</sequence>
<reference key="1">
    <citation type="journal article" date="2004" name="Plant Cell">
        <title>DNA replication licensing affects cell proliferation or endoreplication in a cell type-specific manner.</title>
        <authorList>
            <person name="del Mar Castellano M."/>
            <person name="Boniotti M.B."/>
            <person name="Caro E."/>
            <person name="Schnittger A."/>
            <person name="Gutierrez C."/>
        </authorList>
    </citation>
    <scope>NUCLEOTIDE SEQUENCE [MRNA]</scope>
    <scope>FUNCTION</scope>
    <scope>INTERACTION WITH CDC6 AND CDKA-1</scope>
    <scope>TISSUE SPECIFICITY</scope>
    <scope>INDUCTION BY ABSCISIC ACID</scope>
    <scope>PHOSPHORYLATION</scope>
    <source>
        <strain>cv. Columbia</strain>
    </source>
</reference>
<reference key="2">
    <citation type="journal article" date="1999" name="Nature">
        <title>Sequence and analysis of chromosome 2 of the plant Arabidopsis thaliana.</title>
        <authorList>
            <person name="Lin X."/>
            <person name="Kaul S."/>
            <person name="Rounsley S.D."/>
            <person name="Shea T.P."/>
            <person name="Benito M.-I."/>
            <person name="Town C.D."/>
            <person name="Fujii C.Y."/>
            <person name="Mason T.M."/>
            <person name="Bowman C.L."/>
            <person name="Barnstead M.E."/>
            <person name="Feldblyum T.V."/>
            <person name="Buell C.R."/>
            <person name="Ketchum K.A."/>
            <person name="Lee J.J."/>
            <person name="Ronning C.M."/>
            <person name="Koo H.L."/>
            <person name="Moffat K.S."/>
            <person name="Cronin L.A."/>
            <person name="Shen M."/>
            <person name="Pai G."/>
            <person name="Van Aken S."/>
            <person name="Umayam L."/>
            <person name="Tallon L.J."/>
            <person name="Gill J.E."/>
            <person name="Adams M.D."/>
            <person name="Carrera A.J."/>
            <person name="Creasy T.H."/>
            <person name="Goodman H.M."/>
            <person name="Somerville C.R."/>
            <person name="Copenhaver G.P."/>
            <person name="Preuss D."/>
            <person name="Nierman W.C."/>
            <person name="White O."/>
            <person name="Eisen J.A."/>
            <person name="Salzberg S.L."/>
            <person name="Fraser C.M."/>
            <person name="Venter J.C."/>
        </authorList>
    </citation>
    <scope>NUCLEOTIDE SEQUENCE [LARGE SCALE GENOMIC DNA]</scope>
    <source>
        <strain>cv. Columbia</strain>
    </source>
</reference>
<reference key="3">
    <citation type="journal article" date="2017" name="Plant J.">
        <title>Araport11: a complete reannotation of the Arabidopsis thaliana reference genome.</title>
        <authorList>
            <person name="Cheng C.Y."/>
            <person name="Krishnakumar V."/>
            <person name="Chan A.P."/>
            <person name="Thibaud-Nissen F."/>
            <person name="Schobel S."/>
            <person name="Town C.D."/>
        </authorList>
    </citation>
    <scope>GENOME REANNOTATION</scope>
    <source>
        <strain>cv. Columbia</strain>
    </source>
</reference>
<reference key="4">
    <citation type="journal article" date="2002" name="Plant Physiol.">
        <title>Cloning and sequencing of cDNAs for hypothetical genes from chromosome 2 of Arabidopsis.</title>
        <authorList>
            <person name="Xiao Y.-L."/>
            <person name="Malik M."/>
            <person name="Whitelaw C.A."/>
            <person name="Town C.D."/>
        </authorList>
    </citation>
    <scope>NUCLEOTIDE SEQUENCE [LARGE SCALE MRNA]</scope>
    <source>
        <strain>cv. Columbia</strain>
    </source>
</reference>
<reference key="5">
    <citation type="journal article" date="2005" name="Proc. Natl. Acad. Sci. U.S.A.">
        <title>Cell and plastid division are coordinated through the prereplication factor AtCDT1.</title>
        <authorList>
            <person name="Raynaud C."/>
            <person name="Perennes C."/>
            <person name="Reuzeau C."/>
            <person name="Catrice O."/>
            <person name="Brown S."/>
            <person name="Bergounioux C."/>
        </authorList>
    </citation>
    <scope>FUNCTION</scope>
    <scope>INTERACTION WITH ARC6</scope>
    <scope>SUBCELLULAR LOCATION</scope>
    <source>
        <strain>cv. Wassilewskija</strain>
    </source>
</reference>
<reference key="6">
    <citation type="journal article" date="2008" name="EMBO J.">
        <title>ABAP1 is a novel plant Armadillo BTB protein involved in DNA replication and transcription.</title>
        <authorList>
            <person name="Masuda H.P."/>
            <person name="Cabral L.M."/>
            <person name="De Veylder L."/>
            <person name="Tanurdzic M."/>
            <person name="de Almeida Engler J."/>
            <person name="Geelen D."/>
            <person name="Inze D."/>
            <person name="Martienssen R.A."/>
            <person name="Ferreira P.C."/>
            <person name="Hemerly A.S."/>
        </authorList>
    </citation>
    <scope>INDUCTION BY ABAP1</scope>
</reference>
<proteinExistence type="evidence at protein level"/>
<evidence type="ECO:0000255" key="1"/>
<evidence type="ECO:0000256" key="2">
    <source>
        <dbReference type="SAM" id="MobiDB-lite"/>
    </source>
</evidence>
<evidence type="ECO:0000269" key="3">
    <source>
    </source>
</evidence>
<evidence type="ECO:0000269" key="4">
    <source>
    </source>
</evidence>
<evidence type="ECO:0000269" key="5">
    <source>
    </source>
</evidence>
<evidence type="ECO:0000305" key="6"/>